<keyword id="KW-0997">Cell inner membrane</keyword>
<keyword id="KW-1003">Cell membrane</keyword>
<keyword id="KW-0249">Electron transport</keyword>
<keyword id="KW-0349">Heme</keyword>
<keyword id="KW-0375">Hydrogen ion transport</keyword>
<keyword id="KW-0406">Ion transport</keyword>
<keyword id="KW-0408">Iron</keyword>
<keyword id="KW-0472">Membrane</keyword>
<keyword id="KW-0479">Metal-binding</keyword>
<keyword id="KW-0560">Oxidoreductase</keyword>
<keyword id="KW-0677">Repeat</keyword>
<keyword id="KW-0679">Respiratory chain</keyword>
<keyword id="KW-0812">Transmembrane</keyword>
<keyword id="KW-1133">Transmembrane helix</keyword>
<keyword id="KW-0813">Transport</keyword>
<evidence type="ECO:0000250" key="1">
    <source>
        <dbReference type="UniProtKB" id="D5ARP7"/>
    </source>
</evidence>
<evidence type="ECO:0000250" key="2">
    <source>
        <dbReference type="UniProtKB" id="D9IA45"/>
    </source>
</evidence>
<evidence type="ECO:0000250" key="3">
    <source>
        <dbReference type="UniProtKB" id="Q3J015"/>
    </source>
</evidence>
<evidence type="ECO:0000250" key="4">
    <source>
        <dbReference type="UniProtKB" id="Q8KS19"/>
    </source>
</evidence>
<evidence type="ECO:0000255" key="5"/>
<evidence type="ECO:0000255" key="6">
    <source>
        <dbReference type="PROSITE-ProRule" id="PRU00433"/>
    </source>
</evidence>
<evidence type="ECO:0000269" key="7">
    <source>
    </source>
</evidence>
<evidence type="ECO:0000269" key="8">
    <source>
    </source>
</evidence>
<evidence type="ECO:0000303" key="9">
    <source>
    </source>
</evidence>
<evidence type="ECO:0000303" key="10">
    <source>
    </source>
</evidence>
<evidence type="ECO:0000305" key="11"/>
<evidence type="ECO:0000305" key="12">
    <source>
    </source>
</evidence>
<evidence type="ECO:0000305" key="13">
    <source>
    </source>
</evidence>
<evidence type="ECO:0000312" key="14">
    <source>
        <dbReference type="EMBL" id="CAA56436.1"/>
    </source>
</evidence>
<sequence length="297" mass="31899">MSKKPTTKKEVQTTGHQWDGIEELNTPLPRWWLWTFYATIIWGVAYSIAMPAWPIFSDKATPGLLGSSTRADVEKDIAKFAEMNKAVEEKLVATDLTAIAADPELVTYTRNAGAAVFRTWCAQCHGAGAGGNTGFPSLLDGDWLHGGAIETIYTNVKHGIRDPLDPDTLLVANMPAHLTDELLEPAQIDEVVQYVLQISGQPADEVKATAGQQIFAENCASCHGEDAKGLVEMGAPNLTDGIWLYGGDVATLTSTIQYGRGGVMPSWSWAADGAKPRLSEAQIRAVASYVHSLGGGQ</sequence>
<accession>Q52689</accession>
<reference evidence="14" key="1">
    <citation type="journal article" date="1994" name="Mol. Microbiol.">
        <title>The ccoNOQP gene cluster codes for a cb-type cytochrome oxidase that functions in aerobic respiration of Rhodobacter capsulatus.</title>
        <authorList>
            <person name="Thony-Meyer L."/>
            <person name="Beck C."/>
            <person name="Preisig O."/>
            <person name="Hennecke H."/>
        </authorList>
    </citation>
    <scope>NUCLEOTIDE SEQUENCE [GENOMIC DNA]</scope>
    <source>
        <strain evidence="14">DSM 938 / 37b4</strain>
    </source>
</reference>
<reference evidence="11" key="2">
    <citation type="journal article" date="2006" name="J. Mol. Biol.">
        <title>Multi-step assembly pathway of the cbb3-type cytochrome c oxidase complex.</title>
        <authorList>
            <person name="Kulajta C."/>
            <person name="Thumfart J.O."/>
            <person name="Haid S."/>
            <person name="Daldal F."/>
            <person name="Koch H.G."/>
        </authorList>
    </citation>
    <scope>FUNCTION</scope>
    <scope>CATALYTIC ACTIVITY OF THE CYTOCHROME C OXIDASE COMPLEX</scope>
    <scope>SUBUNIT</scope>
    <scope>IDENTIFICATION BY MASS SPECTROMETRY</scope>
</reference>
<reference evidence="11" key="3">
    <citation type="journal article" date="2008" name="J. Bacteriol.">
        <title>Stability of the cbb3-type cytochrome oxidase requires specific CcoQ-CcoP interactions.</title>
        <authorList>
            <person name="Peters A."/>
            <person name="Kulajta C."/>
            <person name="Pawlik G."/>
            <person name="Daldal F."/>
            <person name="Koch H.G."/>
        </authorList>
    </citation>
    <scope>FUNCTION</scope>
    <scope>CATALYTIC ACTIVITY OF THE CYTOCHROME C OXIDASE COMPLEX</scope>
    <scope>INTERACTION WITH CCOQ</scope>
</reference>
<proteinExistence type="evidence at protein level"/>
<organism>
    <name type="scientific">Rhodobacter capsulatus</name>
    <name type="common">Rhodopseudomonas capsulata</name>
    <dbReference type="NCBI Taxonomy" id="1061"/>
    <lineage>
        <taxon>Bacteria</taxon>
        <taxon>Pseudomonadati</taxon>
        <taxon>Pseudomonadota</taxon>
        <taxon>Alphaproteobacteria</taxon>
        <taxon>Rhodobacterales</taxon>
        <taxon>Rhodobacter group</taxon>
        <taxon>Rhodobacter</taxon>
    </lineage>
</organism>
<name>CCOP_RHOCA</name>
<dbReference type="EMBL" id="X80134">
    <property type="protein sequence ID" value="CAA56436.1"/>
    <property type="molecule type" value="Genomic_DNA"/>
</dbReference>
<dbReference type="PIR" id="S65861">
    <property type="entry name" value="S49348"/>
</dbReference>
<dbReference type="RefSeq" id="WP_074555342.1">
    <property type="nucleotide sequence ID" value="NZ_CP119563.1"/>
</dbReference>
<dbReference type="SMR" id="Q52689"/>
<dbReference type="IntAct" id="Q52689">
    <property type="interactions" value="2"/>
</dbReference>
<dbReference type="OrthoDB" id="9811281at2"/>
<dbReference type="UniPathway" id="UPA00705"/>
<dbReference type="GO" id="GO:0005886">
    <property type="term" value="C:plasma membrane"/>
    <property type="evidence" value="ECO:0007669"/>
    <property type="project" value="UniProtKB-SubCell"/>
</dbReference>
<dbReference type="GO" id="GO:0009055">
    <property type="term" value="F:electron transfer activity"/>
    <property type="evidence" value="ECO:0007669"/>
    <property type="project" value="InterPro"/>
</dbReference>
<dbReference type="GO" id="GO:0020037">
    <property type="term" value="F:heme binding"/>
    <property type="evidence" value="ECO:0007669"/>
    <property type="project" value="InterPro"/>
</dbReference>
<dbReference type="GO" id="GO:0046872">
    <property type="term" value="F:metal ion binding"/>
    <property type="evidence" value="ECO:0007669"/>
    <property type="project" value="UniProtKB-KW"/>
</dbReference>
<dbReference type="GO" id="GO:0016491">
    <property type="term" value="F:oxidoreductase activity"/>
    <property type="evidence" value="ECO:0007669"/>
    <property type="project" value="UniProtKB-KW"/>
</dbReference>
<dbReference type="GO" id="GO:0006119">
    <property type="term" value="P:oxidative phosphorylation"/>
    <property type="evidence" value="ECO:0007669"/>
    <property type="project" value="UniProtKB-UniPathway"/>
</dbReference>
<dbReference type="GO" id="GO:1902600">
    <property type="term" value="P:proton transmembrane transport"/>
    <property type="evidence" value="ECO:0007669"/>
    <property type="project" value="UniProtKB-KW"/>
</dbReference>
<dbReference type="Gene3D" id="6.10.280.130">
    <property type="match status" value="1"/>
</dbReference>
<dbReference type="Gene3D" id="1.10.760.10">
    <property type="entry name" value="Cytochrome c-like domain"/>
    <property type="match status" value="2"/>
</dbReference>
<dbReference type="InterPro" id="IPR032858">
    <property type="entry name" value="CcoP_N"/>
</dbReference>
<dbReference type="InterPro" id="IPR038414">
    <property type="entry name" value="CcoP_N_sf"/>
</dbReference>
<dbReference type="InterPro" id="IPR009056">
    <property type="entry name" value="Cyt_c-like_dom"/>
</dbReference>
<dbReference type="InterPro" id="IPR036909">
    <property type="entry name" value="Cyt_c-like_dom_sf"/>
</dbReference>
<dbReference type="InterPro" id="IPR004678">
    <property type="entry name" value="Cyt_c_oxidase_cbb3_su3"/>
</dbReference>
<dbReference type="InterPro" id="IPR050597">
    <property type="entry name" value="Cytochrome_c_Oxidase_Subunit"/>
</dbReference>
<dbReference type="NCBIfam" id="TIGR00782">
    <property type="entry name" value="ccoP"/>
    <property type="match status" value="1"/>
</dbReference>
<dbReference type="PANTHER" id="PTHR33751">
    <property type="entry name" value="CBB3-TYPE CYTOCHROME C OXIDASE SUBUNIT FIXP"/>
    <property type="match status" value="1"/>
</dbReference>
<dbReference type="PANTHER" id="PTHR33751:SF1">
    <property type="entry name" value="CBB3-TYPE CYTOCHROME C OXIDASE SUBUNIT FIXP"/>
    <property type="match status" value="1"/>
</dbReference>
<dbReference type="Pfam" id="PF00034">
    <property type="entry name" value="Cytochrom_C"/>
    <property type="match status" value="1"/>
</dbReference>
<dbReference type="Pfam" id="PF13442">
    <property type="entry name" value="Cytochrome_CBB3"/>
    <property type="match status" value="1"/>
</dbReference>
<dbReference type="Pfam" id="PF14715">
    <property type="entry name" value="FixP_N"/>
    <property type="match status" value="1"/>
</dbReference>
<dbReference type="PIRSF" id="PIRSF000006">
    <property type="entry name" value="Cbb3-Cox_fixP"/>
    <property type="match status" value="1"/>
</dbReference>
<dbReference type="SUPFAM" id="SSF46626">
    <property type="entry name" value="Cytochrome c"/>
    <property type="match status" value="2"/>
</dbReference>
<dbReference type="PROSITE" id="PS51007">
    <property type="entry name" value="CYTC"/>
    <property type="match status" value="2"/>
</dbReference>
<gene>
    <name evidence="14" type="primary">ccoP</name>
</gene>
<feature type="chain" id="PRO_0000412291" description="Cbb3-type cytochrome c oxidase subunit CcoP">
    <location>
        <begin position="1"/>
        <end position="297"/>
    </location>
</feature>
<feature type="topological domain" description="Cytoplasmic" evidence="3 5">
    <location>
        <begin position="1"/>
        <end position="35"/>
    </location>
</feature>
<feature type="transmembrane region" description="Helical" evidence="5">
    <location>
        <begin position="36"/>
        <end position="56"/>
    </location>
</feature>
<feature type="topological domain" description="Periplasmic" evidence="3 5">
    <location>
        <begin position="57"/>
        <end position="297"/>
    </location>
</feature>
<feature type="domain" description="Cytochrome c 1" evidence="6">
    <location>
        <begin position="108"/>
        <end position="199"/>
    </location>
</feature>
<feature type="domain" description="Cytochrome c 2" evidence="6">
    <location>
        <begin position="206"/>
        <end position="294"/>
    </location>
</feature>
<feature type="binding site" description="covalent" evidence="2">
    <location>
        <position position="121"/>
    </location>
    <ligand>
        <name>heme c</name>
        <dbReference type="ChEBI" id="CHEBI:61717"/>
        <label>1</label>
    </ligand>
</feature>
<feature type="binding site" description="covalent" evidence="2">
    <location>
        <position position="124"/>
    </location>
    <ligand>
        <name>heme c</name>
        <dbReference type="ChEBI" id="CHEBI:61717"/>
        <label>1</label>
    </ligand>
</feature>
<feature type="binding site" description="axial binding residue" evidence="2">
    <location>
        <position position="125"/>
    </location>
    <ligand>
        <name>heme c</name>
        <dbReference type="ChEBI" id="CHEBI:61717"/>
        <label>1</label>
    </ligand>
    <ligandPart>
        <name>Fe</name>
        <dbReference type="ChEBI" id="CHEBI:18248"/>
    </ligandPart>
</feature>
<feature type="binding site" description="axial binding residue" evidence="2">
    <location>
        <position position="174"/>
    </location>
    <ligand>
        <name>heme c</name>
        <dbReference type="ChEBI" id="CHEBI:61717"/>
        <label>2</label>
    </ligand>
    <ligandPart>
        <name>Fe</name>
        <dbReference type="ChEBI" id="CHEBI:18248"/>
    </ligandPart>
</feature>
<feature type="binding site" description="covalent" evidence="2">
    <location>
        <position position="219"/>
    </location>
    <ligand>
        <name>heme c</name>
        <dbReference type="ChEBI" id="CHEBI:61717"/>
        <label>2</label>
    </ligand>
</feature>
<feature type="binding site" description="covalent" evidence="2">
    <location>
        <position position="222"/>
    </location>
    <ligand>
        <name>heme c</name>
        <dbReference type="ChEBI" id="CHEBI:61717"/>
        <label>2</label>
    </ligand>
</feature>
<feature type="binding site" description="axial binding residue" evidence="2">
    <location>
        <position position="223"/>
    </location>
    <ligand>
        <name>heme c</name>
        <dbReference type="ChEBI" id="CHEBI:61717"/>
        <label>2</label>
    </ligand>
    <ligandPart>
        <name>Fe</name>
        <dbReference type="ChEBI" id="CHEBI:18248"/>
    </ligandPart>
</feature>
<feature type="binding site" description="axial binding residue" evidence="2">
    <location>
        <position position="264"/>
    </location>
    <ligand>
        <name>heme c</name>
        <dbReference type="ChEBI" id="CHEBI:61717"/>
        <label>1</label>
    </ligand>
    <ligandPart>
        <name>Fe</name>
        <dbReference type="ChEBI" id="CHEBI:18248"/>
    </ligandPart>
</feature>
<protein>
    <recommendedName>
        <fullName evidence="9 10">Cbb3-type cytochrome c oxidase subunit CcoP</fullName>
        <shortName evidence="10">Cbb3-Cox subunit CcoP</shortName>
    </recommendedName>
    <alternativeName>
        <fullName evidence="9 10">C-type cytochrome CcoP</fullName>
        <shortName evidence="1">Cyt c(P)</shortName>
    </alternativeName>
    <alternativeName>
        <fullName evidence="1">Cytochrome c oxidase subunit III</fullName>
    </alternativeName>
</protein>
<comment type="function">
    <text evidence="1 3 7 8 9 10">C-type cytochrome. Part of the cbb3-type cytochrome c oxidase complex. CcoP subunit is required for transferring electrons from donor cytochrome c via its heme groups to CcoO subunit. From there, electrons are shuttled to the catalytic binuclear center of CcoN subunit where oxygen reduction takes place. The complex also functions as a proton pump.</text>
</comment>
<comment type="cofactor">
    <cofactor evidence="2">
        <name>heme c</name>
        <dbReference type="ChEBI" id="CHEBI:61717"/>
    </cofactor>
    <text evidence="2">Binds 2 heme C groups per subunit.</text>
</comment>
<comment type="pathway">
    <text evidence="12 13">Energy metabolism; oxidative phosphorylation.</text>
</comment>
<comment type="subunit">
    <text evidence="7 8">Component of the cbb3-type cytochrome c oxidase at least composed of CcoN, CcoO, CcoQ and CcoP. Interacts with CcoQ.</text>
</comment>
<comment type="subcellular location">
    <subcellularLocation>
        <location evidence="4 5">Cell inner membrane</location>
        <topology evidence="4 5">Single-pass membrane protein</topology>
    </subcellularLocation>
</comment>
<comment type="similarity">
    <text evidence="11">Belongs to the CcoP / FixP family.</text>
</comment>